<protein>
    <recommendedName>
        <fullName evidence="1">Polyribonucleotide nucleotidyltransferase</fullName>
        <ecNumber evidence="1">2.7.7.8</ecNumber>
    </recommendedName>
    <alternativeName>
        <fullName evidence="1">Polynucleotide phosphorylase</fullName>
        <shortName evidence="1">PNPase</shortName>
    </alternativeName>
</protein>
<dbReference type="EC" id="2.7.7.8" evidence="1"/>
<dbReference type="EMBL" id="AE000520">
    <property type="protein sequence ID" value="AAC26576.1"/>
    <property type="molecule type" value="Genomic_DNA"/>
</dbReference>
<dbReference type="PIR" id="C71269">
    <property type="entry name" value="C71269"/>
</dbReference>
<dbReference type="RefSeq" id="WP_010882329.1">
    <property type="nucleotide sequence ID" value="NC_021490.2"/>
</dbReference>
<dbReference type="SMR" id="O83856"/>
<dbReference type="STRING" id="243276.TP_0886"/>
<dbReference type="EnsemblBacteria" id="AAC26576">
    <property type="protein sequence ID" value="AAC26576"/>
    <property type="gene ID" value="TP_0886"/>
</dbReference>
<dbReference type="GeneID" id="93876640"/>
<dbReference type="KEGG" id="tpa:TP_0886"/>
<dbReference type="KEGG" id="tpw:TPANIC_0886"/>
<dbReference type="eggNOG" id="COG1185">
    <property type="taxonomic scope" value="Bacteria"/>
</dbReference>
<dbReference type="HOGENOM" id="CLU_004217_2_2_12"/>
<dbReference type="OrthoDB" id="9804305at2"/>
<dbReference type="Proteomes" id="UP000000811">
    <property type="component" value="Chromosome"/>
</dbReference>
<dbReference type="GO" id="GO:0005829">
    <property type="term" value="C:cytosol"/>
    <property type="evidence" value="ECO:0007669"/>
    <property type="project" value="TreeGrafter"/>
</dbReference>
<dbReference type="GO" id="GO:0000175">
    <property type="term" value="F:3'-5'-RNA exonuclease activity"/>
    <property type="evidence" value="ECO:0007669"/>
    <property type="project" value="TreeGrafter"/>
</dbReference>
<dbReference type="GO" id="GO:0000287">
    <property type="term" value="F:magnesium ion binding"/>
    <property type="evidence" value="ECO:0007669"/>
    <property type="project" value="UniProtKB-UniRule"/>
</dbReference>
<dbReference type="GO" id="GO:0004654">
    <property type="term" value="F:polyribonucleotide nucleotidyltransferase activity"/>
    <property type="evidence" value="ECO:0007669"/>
    <property type="project" value="UniProtKB-UniRule"/>
</dbReference>
<dbReference type="GO" id="GO:0003723">
    <property type="term" value="F:RNA binding"/>
    <property type="evidence" value="ECO:0007669"/>
    <property type="project" value="UniProtKB-UniRule"/>
</dbReference>
<dbReference type="GO" id="GO:0006402">
    <property type="term" value="P:mRNA catabolic process"/>
    <property type="evidence" value="ECO:0007669"/>
    <property type="project" value="UniProtKB-UniRule"/>
</dbReference>
<dbReference type="GO" id="GO:0006396">
    <property type="term" value="P:RNA processing"/>
    <property type="evidence" value="ECO:0007669"/>
    <property type="project" value="InterPro"/>
</dbReference>
<dbReference type="CDD" id="cd02393">
    <property type="entry name" value="KH-I_PNPase"/>
    <property type="match status" value="1"/>
</dbReference>
<dbReference type="CDD" id="cd11363">
    <property type="entry name" value="RNase_PH_PNPase_1"/>
    <property type="match status" value="1"/>
</dbReference>
<dbReference type="CDD" id="cd11364">
    <property type="entry name" value="RNase_PH_PNPase_2"/>
    <property type="match status" value="1"/>
</dbReference>
<dbReference type="CDD" id="cd04472">
    <property type="entry name" value="S1_PNPase"/>
    <property type="match status" value="1"/>
</dbReference>
<dbReference type="FunFam" id="3.30.1370.10:FF:000001">
    <property type="entry name" value="Polyribonucleotide nucleotidyltransferase"/>
    <property type="match status" value="1"/>
</dbReference>
<dbReference type="FunFam" id="3.30.230.70:FF:000001">
    <property type="entry name" value="Polyribonucleotide nucleotidyltransferase"/>
    <property type="match status" value="1"/>
</dbReference>
<dbReference type="FunFam" id="3.30.230.70:FF:000002">
    <property type="entry name" value="Polyribonucleotide nucleotidyltransferase"/>
    <property type="match status" value="1"/>
</dbReference>
<dbReference type="FunFam" id="2.40.50.140:FF:000189">
    <property type="entry name" value="Polyribonucleotide nucleotidyltransferase, putative"/>
    <property type="match status" value="1"/>
</dbReference>
<dbReference type="Gene3D" id="3.30.230.70">
    <property type="entry name" value="GHMP Kinase, N-terminal domain"/>
    <property type="match status" value="2"/>
</dbReference>
<dbReference type="Gene3D" id="3.30.1370.10">
    <property type="entry name" value="K Homology domain, type 1"/>
    <property type="match status" value="1"/>
</dbReference>
<dbReference type="Gene3D" id="2.40.50.140">
    <property type="entry name" value="Nucleic acid-binding proteins"/>
    <property type="match status" value="1"/>
</dbReference>
<dbReference type="HAMAP" id="MF_01595">
    <property type="entry name" value="PNPase"/>
    <property type="match status" value="1"/>
</dbReference>
<dbReference type="InterPro" id="IPR001247">
    <property type="entry name" value="ExoRNase_PH_dom1"/>
</dbReference>
<dbReference type="InterPro" id="IPR015847">
    <property type="entry name" value="ExoRNase_PH_dom2"/>
</dbReference>
<dbReference type="InterPro" id="IPR036345">
    <property type="entry name" value="ExoRNase_PH_dom2_sf"/>
</dbReference>
<dbReference type="InterPro" id="IPR004087">
    <property type="entry name" value="KH_dom"/>
</dbReference>
<dbReference type="InterPro" id="IPR004088">
    <property type="entry name" value="KH_dom_type_1"/>
</dbReference>
<dbReference type="InterPro" id="IPR036612">
    <property type="entry name" value="KH_dom_type_1_sf"/>
</dbReference>
<dbReference type="InterPro" id="IPR012340">
    <property type="entry name" value="NA-bd_OB-fold"/>
</dbReference>
<dbReference type="InterPro" id="IPR012162">
    <property type="entry name" value="PNPase"/>
</dbReference>
<dbReference type="InterPro" id="IPR027408">
    <property type="entry name" value="PNPase/RNase_PH_dom_sf"/>
</dbReference>
<dbReference type="InterPro" id="IPR015848">
    <property type="entry name" value="PNPase_PH_RNA-bd_bac/org-type"/>
</dbReference>
<dbReference type="InterPro" id="IPR036456">
    <property type="entry name" value="PNPase_PH_RNA-bd_sf"/>
</dbReference>
<dbReference type="InterPro" id="IPR020568">
    <property type="entry name" value="Ribosomal_Su5_D2-typ_SF"/>
</dbReference>
<dbReference type="InterPro" id="IPR003029">
    <property type="entry name" value="S1_domain"/>
</dbReference>
<dbReference type="NCBIfam" id="TIGR03591">
    <property type="entry name" value="polynuc_phos"/>
    <property type="match status" value="1"/>
</dbReference>
<dbReference type="NCBIfam" id="NF008805">
    <property type="entry name" value="PRK11824.1"/>
    <property type="match status" value="1"/>
</dbReference>
<dbReference type="PANTHER" id="PTHR11252">
    <property type="entry name" value="POLYRIBONUCLEOTIDE NUCLEOTIDYLTRANSFERASE"/>
    <property type="match status" value="1"/>
</dbReference>
<dbReference type="PANTHER" id="PTHR11252:SF0">
    <property type="entry name" value="POLYRIBONUCLEOTIDE NUCLEOTIDYLTRANSFERASE 1, MITOCHONDRIAL"/>
    <property type="match status" value="1"/>
</dbReference>
<dbReference type="Pfam" id="PF00013">
    <property type="entry name" value="KH_1"/>
    <property type="match status" value="1"/>
</dbReference>
<dbReference type="Pfam" id="PF03726">
    <property type="entry name" value="PNPase"/>
    <property type="match status" value="1"/>
</dbReference>
<dbReference type="Pfam" id="PF01138">
    <property type="entry name" value="RNase_PH"/>
    <property type="match status" value="2"/>
</dbReference>
<dbReference type="Pfam" id="PF03725">
    <property type="entry name" value="RNase_PH_C"/>
    <property type="match status" value="1"/>
</dbReference>
<dbReference type="Pfam" id="PF00575">
    <property type="entry name" value="S1"/>
    <property type="match status" value="1"/>
</dbReference>
<dbReference type="PIRSF" id="PIRSF005499">
    <property type="entry name" value="PNPase"/>
    <property type="match status" value="1"/>
</dbReference>
<dbReference type="SMART" id="SM00322">
    <property type="entry name" value="KH"/>
    <property type="match status" value="1"/>
</dbReference>
<dbReference type="SMART" id="SM00316">
    <property type="entry name" value="S1"/>
    <property type="match status" value="1"/>
</dbReference>
<dbReference type="SUPFAM" id="SSF54791">
    <property type="entry name" value="Eukaryotic type KH-domain (KH-domain type I)"/>
    <property type="match status" value="1"/>
</dbReference>
<dbReference type="SUPFAM" id="SSF50249">
    <property type="entry name" value="Nucleic acid-binding proteins"/>
    <property type="match status" value="1"/>
</dbReference>
<dbReference type="SUPFAM" id="SSF46915">
    <property type="entry name" value="Polynucleotide phosphorylase/guanosine pentaphosphate synthase (PNPase/GPSI), domain 3"/>
    <property type="match status" value="1"/>
</dbReference>
<dbReference type="SUPFAM" id="SSF55666">
    <property type="entry name" value="Ribonuclease PH domain 2-like"/>
    <property type="match status" value="2"/>
</dbReference>
<dbReference type="SUPFAM" id="SSF54211">
    <property type="entry name" value="Ribosomal protein S5 domain 2-like"/>
    <property type="match status" value="2"/>
</dbReference>
<dbReference type="PROSITE" id="PS50084">
    <property type="entry name" value="KH_TYPE_1"/>
    <property type="match status" value="1"/>
</dbReference>
<dbReference type="PROSITE" id="PS50126">
    <property type="entry name" value="S1"/>
    <property type="match status" value="1"/>
</dbReference>
<feature type="chain" id="PRO_0000329921" description="Polyribonucleotide nucleotidyltransferase">
    <location>
        <begin position="1"/>
        <end position="702"/>
    </location>
</feature>
<feature type="domain" description="KH" evidence="1">
    <location>
        <begin position="551"/>
        <end position="610"/>
    </location>
</feature>
<feature type="domain" description="S1 motif" evidence="1">
    <location>
        <begin position="620"/>
        <end position="688"/>
    </location>
</feature>
<feature type="binding site" evidence="1">
    <location>
        <position position="484"/>
    </location>
    <ligand>
        <name>Mg(2+)</name>
        <dbReference type="ChEBI" id="CHEBI:18420"/>
    </ligand>
</feature>
<feature type="binding site" evidence="1">
    <location>
        <position position="490"/>
    </location>
    <ligand>
        <name>Mg(2+)</name>
        <dbReference type="ChEBI" id="CHEBI:18420"/>
    </ligand>
</feature>
<evidence type="ECO:0000255" key="1">
    <source>
        <dbReference type="HAMAP-Rule" id="MF_01595"/>
    </source>
</evidence>
<comment type="function">
    <text evidence="1">Involved in mRNA degradation. Catalyzes the phosphorolysis of single-stranded polyribonucleotides processively in the 3'- to 5'-direction.</text>
</comment>
<comment type="catalytic activity">
    <reaction evidence="1">
        <text>RNA(n+1) + phosphate = RNA(n) + a ribonucleoside 5'-diphosphate</text>
        <dbReference type="Rhea" id="RHEA:22096"/>
        <dbReference type="Rhea" id="RHEA-COMP:14527"/>
        <dbReference type="Rhea" id="RHEA-COMP:17342"/>
        <dbReference type="ChEBI" id="CHEBI:43474"/>
        <dbReference type="ChEBI" id="CHEBI:57930"/>
        <dbReference type="ChEBI" id="CHEBI:140395"/>
        <dbReference type="EC" id="2.7.7.8"/>
    </reaction>
</comment>
<comment type="cofactor">
    <cofactor evidence="1">
        <name>Mg(2+)</name>
        <dbReference type="ChEBI" id="CHEBI:18420"/>
    </cofactor>
</comment>
<comment type="subcellular location">
    <subcellularLocation>
        <location evidence="1">Cytoplasm</location>
    </subcellularLocation>
</comment>
<comment type="similarity">
    <text evidence="1">Belongs to the polyribonucleotide nucleotidyltransferase family.</text>
</comment>
<gene>
    <name evidence="1" type="primary">pnp</name>
    <name type="ordered locus">TP_0886</name>
</gene>
<reference key="1">
    <citation type="journal article" date="1998" name="Science">
        <title>Complete genome sequence of Treponema pallidum, the syphilis spirochete.</title>
        <authorList>
            <person name="Fraser C.M."/>
            <person name="Norris S.J."/>
            <person name="Weinstock G.M."/>
            <person name="White O."/>
            <person name="Sutton G.G."/>
            <person name="Dodson R.J."/>
            <person name="Gwinn M.L."/>
            <person name="Hickey E.K."/>
            <person name="Clayton R.A."/>
            <person name="Ketchum K.A."/>
            <person name="Sodergren E."/>
            <person name="Hardham J.M."/>
            <person name="McLeod M.P."/>
            <person name="Salzberg S.L."/>
            <person name="Peterson J.D."/>
            <person name="Khalak H.G."/>
            <person name="Richardson D.L."/>
            <person name="Howell J.K."/>
            <person name="Chidambaram M."/>
            <person name="Utterback T.R."/>
            <person name="McDonald L.A."/>
            <person name="Artiach P."/>
            <person name="Bowman C."/>
            <person name="Cotton M.D."/>
            <person name="Fujii C."/>
            <person name="Garland S.A."/>
            <person name="Hatch B."/>
            <person name="Horst K."/>
            <person name="Roberts K.M."/>
            <person name="Sandusky M."/>
            <person name="Weidman J.F."/>
            <person name="Smith H.O."/>
            <person name="Venter J.C."/>
        </authorList>
    </citation>
    <scope>NUCLEOTIDE SEQUENCE [LARGE SCALE GENOMIC DNA]</scope>
    <source>
        <strain>Nichols</strain>
    </source>
</reference>
<organism>
    <name type="scientific">Treponema pallidum (strain Nichols)</name>
    <dbReference type="NCBI Taxonomy" id="243276"/>
    <lineage>
        <taxon>Bacteria</taxon>
        <taxon>Pseudomonadati</taxon>
        <taxon>Spirochaetota</taxon>
        <taxon>Spirochaetia</taxon>
        <taxon>Spirochaetales</taxon>
        <taxon>Treponemataceae</taxon>
        <taxon>Treponema</taxon>
    </lineage>
</organism>
<accession>O83856</accession>
<sequence length="702" mass="76332">MKHSITGTIGDHPLLLESGYLARQANGSVYLQCEGTAILATVCSSAQRQEGLDYVPLTVDFNEKYYAVGKMPGGFIKREGRPKDREILISRLIDRPMRPLFEKEFGRDIHVVPTCISSDMVHPHDVLAIVASSAAVTLSDIPFHGPVAAVRVAYLNGSYVINPTFSQIDAASMEVVVAGTRQGITMVEGGAREVSEDLMLGALEQAQEHIKALCDMQERLRGLCGKEKQTVIPSSAQLVGRDRIYELAYPRLAQALYAQGKGERRSACDAVKRDVAQQYAAQLENDVQRRLFDALFHEMEYEILRLNILDRGLRIDGRAIDAIRPIACEVGVLPRPHGSAVFTRGETQSLAVVTLGAMSDGQVYDDIEGDRRENFILHYNFPPFSVGEIGRMGVGRREIGHGCLAHRSLSAVIPDPEQFPYTVRVVSEILESNGSSSMATVCSGTLSLLHAGVPIKKPVAGIAMGLITDGVRYAILSDILGEEDHLGDMDFKVAGTCDGITGFQMDVKVEAVSASLMKEALQQARVGRLHILSVMNQTISAPSVHISRYAPHIESFKIAVEKIGALIGPGGKTVKSLSDQYRVTINTDSDGTVTVSGRDAQSVFDAKVAVVGLTEDPRVGRVYQGVVKRIVEFGAFVEIFPGKEGLCHVSKLSRSRVSKVSDVLQEGQRICVKLIDIDRMGRLNLSYIDALEGKSGGLDTTK</sequence>
<keyword id="KW-0963">Cytoplasm</keyword>
<keyword id="KW-0460">Magnesium</keyword>
<keyword id="KW-0479">Metal-binding</keyword>
<keyword id="KW-0548">Nucleotidyltransferase</keyword>
<keyword id="KW-1185">Reference proteome</keyword>
<keyword id="KW-0694">RNA-binding</keyword>
<keyword id="KW-0808">Transferase</keyword>
<name>PNP_TREPA</name>
<proteinExistence type="inferred from homology"/>